<gene>
    <name evidence="1" type="primary">fusA</name>
    <name type="ordered locus">GTNG_0103</name>
</gene>
<proteinExistence type="inferred from homology"/>
<organism>
    <name type="scientific">Geobacillus thermodenitrificans (strain NG80-2)</name>
    <dbReference type="NCBI Taxonomy" id="420246"/>
    <lineage>
        <taxon>Bacteria</taxon>
        <taxon>Bacillati</taxon>
        <taxon>Bacillota</taxon>
        <taxon>Bacilli</taxon>
        <taxon>Bacillales</taxon>
        <taxon>Anoxybacillaceae</taxon>
        <taxon>Geobacillus</taxon>
    </lineage>
</organism>
<comment type="function">
    <text evidence="1">Catalyzes the GTP-dependent ribosomal translocation step during translation elongation. During this step, the ribosome changes from the pre-translocational (PRE) to the post-translocational (POST) state as the newly formed A-site-bound peptidyl-tRNA and P-site-bound deacylated tRNA move to the P and E sites, respectively. Catalyzes the coordinated movement of the two tRNA molecules, the mRNA and conformational changes in the ribosome.</text>
</comment>
<comment type="subcellular location">
    <subcellularLocation>
        <location evidence="1">Cytoplasm</location>
    </subcellularLocation>
</comment>
<comment type="similarity">
    <text evidence="1">Belongs to the TRAFAC class translation factor GTPase superfamily. Classic translation factor GTPase family. EF-G/EF-2 subfamily.</text>
</comment>
<reference key="1">
    <citation type="journal article" date="2007" name="Proc. Natl. Acad. Sci. U.S.A.">
        <title>Genome and proteome of long-chain alkane degrading Geobacillus thermodenitrificans NG80-2 isolated from a deep-subsurface oil reservoir.</title>
        <authorList>
            <person name="Feng L."/>
            <person name="Wang W."/>
            <person name="Cheng J."/>
            <person name="Ren Y."/>
            <person name="Zhao G."/>
            <person name="Gao C."/>
            <person name="Tang Y."/>
            <person name="Liu X."/>
            <person name="Han W."/>
            <person name="Peng X."/>
            <person name="Liu R."/>
            <person name="Wang L."/>
        </authorList>
    </citation>
    <scope>NUCLEOTIDE SEQUENCE [LARGE SCALE GENOMIC DNA]</scope>
    <source>
        <strain>NG80-2</strain>
    </source>
</reference>
<accession>A4IJI6</accession>
<name>EFG_GEOTN</name>
<evidence type="ECO:0000255" key="1">
    <source>
        <dbReference type="HAMAP-Rule" id="MF_00054"/>
    </source>
</evidence>
<protein>
    <recommendedName>
        <fullName evidence="1">Elongation factor G</fullName>
        <shortName evidence="1">EF-G</shortName>
    </recommendedName>
</protein>
<feature type="chain" id="PRO_1000008828" description="Elongation factor G">
    <location>
        <begin position="1"/>
        <end position="692"/>
    </location>
</feature>
<feature type="domain" description="tr-type G">
    <location>
        <begin position="8"/>
        <end position="282"/>
    </location>
</feature>
<feature type="binding site" evidence="1">
    <location>
        <begin position="17"/>
        <end position="24"/>
    </location>
    <ligand>
        <name>GTP</name>
        <dbReference type="ChEBI" id="CHEBI:37565"/>
    </ligand>
</feature>
<feature type="binding site" evidence="1">
    <location>
        <begin position="81"/>
        <end position="85"/>
    </location>
    <ligand>
        <name>GTP</name>
        <dbReference type="ChEBI" id="CHEBI:37565"/>
    </ligand>
</feature>
<feature type="binding site" evidence="1">
    <location>
        <begin position="135"/>
        <end position="138"/>
    </location>
    <ligand>
        <name>GTP</name>
        <dbReference type="ChEBI" id="CHEBI:37565"/>
    </ligand>
</feature>
<sequence>MAREFSLENTRNIGIMAHIDAGKTTTTERILFYTGRVHKIGETHEGSATMDWMEQEQERGITITSAATTAQWKGHRINIIDTPGHVDFTVEVERSLRVLDGAITVLDAQSGVEPQTETVWRQATTYGVPRIVFVNKMDKIGADFLYAVKTLHDRLQANAYPVQLPIGAEDQFTGIIDLVEMCAYHYHDDLGKNIERIEIPEDYRDLAEEYHGKLIEAVAELDEELMMKYLEGEEITKEELKAAIRKATINVEFYPVFCGSAFKNKGVQLLLDGVVDYLPSPLDIPAIRGIIPDTEEEVAREARDDAPFSALAFKIMTDPYVGKLTFFRVYSGTLDSGSYVMNSTKRKRERIGRLLQMHANHRQEISTVYAGDIAAAVGLKETTTGDTLCDEKNLVILESMQFPEPVISVAIEPKSKADQDKMGQALQKLQEEDPTFRAHTDPETGQTIISGMGELHLDIIVDRMRREFKVEANVGAPQVAYRETFRQSAQVEGKFIRQSGGRGQYGHVWIEFTPNERGKGFEFENAIVGGVVPKEYVPAVQAGLEEAMQNGVLAGYPVVDIKAKLFDGSYHDVDSSEMAFKIAASMALKNAAAKCEPVLLEPIMKVEVVIPEEYLGDIMGDITSRRGRVEGMEARGNAQVVRAMVPMAEMFGYATSLRSNTQGRGTFSMVFDHYEEVPKNIADEIIKKNKGE</sequence>
<keyword id="KW-0963">Cytoplasm</keyword>
<keyword id="KW-0251">Elongation factor</keyword>
<keyword id="KW-0342">GTP-binding</keyword>
<keyword id="KW-0547">Nucleotide-binding</keyword>
<keyword id="KW-0648">Protein biosynthesis</keyword>
<dbReference type="EMBL" id="CP000557">
    <property type="protein sequence ID" value="ABO65490.1"/>
    <property type="molecule type" value="Genomic_DNA"/>
</dbReference>
<dbReference type="RefSeq" id="WP_011886629.1">
    <property type="nucleotide sequence ID" value="NC_009328.1"/>
</dbReference>
<dbReference type="SMR" id="A4IJI6"/>
<dbReference type="KEGG" id="gtn:GTNG_0103"/>
<dbReference type="eggNOG" id="COG0480">
    <property type="taxonomic scope" value="Bacteria"/>
</dbReference>
<dbReference type="HOGENOM" id="CLU_002794_4_1_9"/>
<dbReference type="Proteomes" id="UP000001578">
    <property type="component" value="Chromosome"/>
</dbReference>
<dbReference type="GO" id="GO:0005737">
    <property type="term" value="C:cytoplasm"/>
    <property type="evidence" value="ECO:0007669"/>
    <property type="project" value="UniProtKB-SubCell"/>
</dbReference>
<dbReference type="GO" id="GO:0005525">
    <property type="term" value="F:GTP binding"/>
    <property type="evidence" value="ECO:0007669"/>
    <property type="project" value="UniProtKB-UniRule"/>
</dbReference>
<dbReference type="GO" id="GO:0003924">
    <property type="term" value="F:GTPase activity"/>
    <property type="evidence" value="ECO:0007669"/>
    <property type="project" value="InterPro"/>
</dbReference>
<dbReference type="GO" id="GO:0003746">
    <property type="term" value="F:translation elongation factor activity"/>
    <property type="evidence" value="ECO:0007669"/>
    <property type="project" value="UniProtKB-UniRule"/>
</dbReference>
<dbReference type="GO" id="GO:0032790">
    <property type="term" value="P:ribosome disassembly"/>
    <property type="evidence" value="ECO:0007669"/>
    <property type="project" value="TreeGrafter"/>
</dbReference>
<dbReference type="CDD" id="cd01886">
    <property type="entry name" value="EF-G"/>
    <property type="match status" value="1"/>
</dbReference>
<dbReference type="CDD" id="cd16262">
    <property type="entry name" value="EFG_III"/>
    <property type="match status" value="1"/>
</dbReference>
<dbReference type="CDD" id="cd01434">
    <property type="entry name" value="EFG_mtEFG1_IV"/>
    <property type="match status" value="1"/>
</dbReference>
<dbReference type="CDD" id="cd03713">
    <property type="entry name" value="EFG_mtEFG_C"/>
    <property type="match status" value="1"/>
</dbReference>
<dbReference type="CDD" id="cd04088">
    <property type="entry name" value="EFG_mtEFG_II"/>
    <property type="match status" value="1"/>
</dbReference>
<dbReference type="FunFam" id="2.40.30.10:FF:000006">
    <property type="entry name" value="Elongation factor G"/>
    <property type="match status" value="1"/>
</dbReference>
<dbReference type="FunFam" id="3.30.230.10:FF:000003">
    <property type="entry name" value="Elongation factor G"/>
    <property type="match status" value="1"/>
</dbReference>
<dbReference type="FunFam" id="3.30.70.240:FF:000001">
    <property type="entry name" value="Elongation factor G"/>
    <property type="match status" value="1"/>
</dbReference>
<dbReference type="FunFam" id="3.30.70.870:FF:000001">
    <property type="entry name" value="Elongation factor G"/>
    <property type="match status" value="1"/>
</dbReference>
<dbReference type="FunFam" id="3.40.50.300:FF:000029">
    <property type="entry name" value="Elongation factor G"/>
    <property type="match status" value="1"/>
</dbReference>
<dbReference type="Gene3D" id="3.30.230.10">
    <property type="match status" value="1"/>
</dbReference>
<dbReference type="Gene3D" id="3.30.70.240">
    <property type="match status" value="1"/>
</dbReference>
<dbReference type="Gene3D" id="3.30.70.870">
    <property type="entry name" value="Elongation Factor G (Translational Gtpase), domain 3"/>
    <property type="match status" value="1"/>
</dbReference>
<dbReference type="Gene3D" id="3.40.50.300">
    <property type="entry name" value="P-loop containing nucleotide triphosphate hydrolases"/>
    <property type="match status" value="1"/>
</dbReference>
<dbReference type="Gene3D" id="2.40.30.10">
    <property type="entry name" value="Translation factors"/>
    <property type="match status" value="1"/>
</dbReference>
<dbReference type="HAMAP" id="MF_00054_B">
    <property type="entry name" value="EF_G_EF_2_B"/>
    <property type="match status" value="1"/>
</dbReference>
<dbReference type="InterPro" id="IPR053905">
    <property type="entry name" value="EF-G-like_DII"/>
</dbReference>
<dbReference type="InterPro" id="IPR041095">
    <property type="entry name" value="EFG_II"/>
</dbReference>
<dbReference type="InterPro" id="IPR009022">
    <property type="entry name" value="EFG_III"/>
</dbReference>
<dbReference type="InterPro" id="IPR035647">
    <property type="entry name" value="EFG_III/V"/>
</dbReference>
<dbReference type="InterPro" id="IPR047872">
    <property type="entry name" value="EFG_IV"/>
</dbReference>
<dbReference type="InterPro" id="IPR035649">
    <property type="entry name" value="EFG_V"/>
</dbReference>
<dbReference type="InterPro" id="IPR000640">
    <property type="entry name" value="EFG_V-like"/>
</dbReference>
<dbReference type="InterPro" id="IPR031157">
    <property type="entry name" value="G_TR_CS"/>
</dbReference>
<dbReference type="InterPro" id="IPR027417">
    <property type="entry name" value="P-loop_NTPase"/>
</dbReference>
<dbReference type="InterPro" id="IPR020568">
    <property type="entry name" value="Ribosomal_Su5_D2-typ_SF"/>
</dbReference>
<dbReference type="InterPro" id="IPR014721">
    <property type="entry name" value="Ribsml_uS5_D2-typ_fold_subgr"/>
</dbReference>
<dbReference type="InterPro" id="IPR005225">
    <property type="entry name" value="Small_GTP-bd"/>
</dbReference>
<dbReference type="InterPro" id="IPR000795">
    <property type="entry name" value="T_Tr_GTP-bd_dom"/>
</dbReference>
<dbReference type="InterPro" id="IPR009000">
    <property type="entry name" value="Transl_B-barrel_sf"/>
</dbReference>
<dbReference type="InterPro" id="IPR004540">
    <property type="entry name" value="Transl_elong_EFG/EF2"/>
</dbReference>
<dbReference type="InterPro" id="IPR005517">
    <property type="entry name" value="Transl_elong_EFG/EF2_IV"/>
</dbReference>
<dbReference type="NCBIfam" id="TIGR00484">
    <property type="entry name" value="EF-G"/>
    <property type="match status" value="1"/>
</dbReference>
<dbReference type="NCBIfam" id="NF009379">
    <property type="entry name" value="PRK12740.1-3"/>
    <property type="match status" value="1"/>
</dbReference>
<dbReference type="NCBIfam" id="NF009381">
    <property type="entry name" value="PRK12740.1-5"/>
    <property type="match status" value="1"/>
</dbReference>
<dbReference type="NCBIfam" id="NF009891">
    <property type="entry name" value="PRK13351.1-1"/>
    <property type="match status" value="1"/>
</dbReference>
<dbReference type="NCBIfam" id="TIGR00231">
    <property type="entry name" value="small_GTP"/>
    <property type="match status" value="1"/>
</dbReference>
<dbReference type="PANTHER" id="PTHR43261:SF1">
    <property type="entry name" value="RIBOSOME-RELEASING FACTOR 2, MITOCHONDRIAL"/>
    <property type="match status" value="1"/>
</dbReference>
<dbReference type="PANTHER" id="PTHR43261">
    <property type="entry name" value="TRANSLATION ELONGATION FACTOR G-RELATED"/>
    <property type="match status" value="1"/>
</dbReference>
<dbReference type="Pfam" id="PF22042">
    <property type="entry name" value="EF-G_D2"/>
    <property type="match status" value="1"/>
</dbReference>
<dbReference type="Pfam" id="PF00679">
    <property type="entry name" value="EFG_C"/>
    <property type="match status" value="1"/>
</dbReference>
<dbReference type="Pfam" id="PF14492">
    <property type="entry name" value="EFG_III"/>
    <property type="match status" value="1"/>
</dbReference>
<dbReference type="Pfam" id="PF03764">
    <property type="entry name" value="EFG_IV"/>
    <property type="match status" value="1"/>
</dbReference>
<dbReference type="Pfam" id="PF00009">
    <property type="entry name" value="GTP_EFTU"/>
    <property type="match status" value="1"/>
</dbReference>
<dbReference type="PRINTS" id="PR00315">
    <property type="entry name" value="ELONGATNFCT"/>
</dbReference>
<dbReference type="SMART" id="SM00838">
    <property type="entry name" value="EFG_C"/>
    <property type="match status" value="1"/>
</dbReference>
<dbReference type="SMART" id="SM00889">
    <property type="entry name" value="EFG_IV"/>
    <property type="match status" value="1"/>
</dbReference>
<dbReference type="SUPFAM" id="SSF54980">
    <property type="entry name" value="EF-G C-terminal domain-like"/>
    <property type="match status" value="2"/>
</dbReference>
<dbReference type="SUPFAM" id="SSF52540">
    <property type="entry name" value="P-loop containing nucleoside triphosphate hydrolases"/>
    <property type="match status" value="1"/>
</dbReference>
<dbReference type="SUPFAM" id="SSF54211">
    <property type="entry name" value="Ribosomal protein S5 domain 2-like"/>
    <property type="match status" value="1"/>
</dbReference>
<dbReference type="SUPFAM" id="SSF50447">
    <property type="entry name" value="Translation proteins"/>
    <property type="match status" value="1"/>
</dbReference>
<dbReference type="PROSITE" id="PS00301">
    <property type="entry name" value="G_TR_1"/>
    <property type="match status" value="1"/>
</dbReference>
<dbReference type="PROSITE" id="PS51722">
    <property type="entry name" value="G_TR_2"/>
    <property type="match status" value="1"/>
</dbReference>